<dbReference type="EMBL" id="M88336">
    <property type="protein sequence ID" value="AAA42729.1"/>
    <property type="molecule type" value="Genomic_DNA"/>
</dbReference>
<dbReference type="PIR" id="A40237">
    <property type="entry name" value="WMXF30"/>
</dbReference>
<dbReference type="RefSeq" id="YP_009703861.1">
    <property type="nucleotide sequence ID" value="NC_044958.1"/>
</dbReference>
<dbReference type="SMR" id="P29999"/>
<dbReference type="GeneID" id="41902675"/>
<dbReference type="GO" id="GO:0030430">
    <property type="term" value="C:host cell cytoplasm"/>
    <property type="evidence" value="ECO:0007669"/>
    <property type="project" value="UniProtKB-SubCell"/>
</dbReference>
<dbReference type="GO" id="GO:0042025">
    <property type="term" value="C:host cell nucleus"/>
    <property type="evidence" value="ECO:0007669"/>
    <property type="project" value="UniProtKB-SubCell"/>
</dbReference>
<dbReference type="GO" id="GO:0044423">
    <property type="term" value="C:virion component"/>
    <property type="evidence" value="ECO:0007669"/>
    <property type="project" value="UniProtKB-KW"/>
</dbReference>
<proteinExistence type="inferred from homology"/>
<evidence type="ECO:0000250" key="1"/>
<evidence type="ECO:0000250" key="2">
    <source>
        <dbReference type="UniProtKB" id="P34204"/>
    </source>
</evidence>
<evidence type="ECO:0000305" key="3"/>
<protein>
    <recommendedName>
        <fullName>Phosphoprotein p30</fullName>
    </recommendedName>
    <alternativeName>
        <fullName>p32</fullName>
    </alternativeName>
</protein>
<organismHost>
    <name type="scientific">Ornithodoros</name>
    <name type="common">relapsing fever ticks</name>
    <dbReference type="NCBI Taxonomy" id="6937"/>
</organismHost>
<organismHost>
    <name type="scientific">Sus scrofa</name>
    <name type="common">Pig</name>
    <dbReference type="NCBI Taxonomy" id="9823"/>
</organismHost>
<reference key="1">
    <citation type="journal article" date="1992" name="Virology">
        <title>Characterization of p30, a highly antigenic membrane and secreted protein of African swine fever virus.</title>
        <authorList>
            <person name="Afonso C.L."/>
            <person name="Alcaraz C."/>
            <person name="Brun A."/>
            <person name="Sussman M.D."/>
            <person name="Onisk D.V."/>
            <person name="Escribano J.M."/>
            <person name="Rock D.L."/>
        </authorList>
    </citation>
    <scope>NUCLEOTIDE SEQUENCE [GENOMIC DNA]</scope>
    <scope>SUBCELLULAR LOCATION</scope>
</reference>
<feature type="chain" id="PRO_0000221959" description="Phosphoprotein p30">
    <location>
        <begin position="1"/>
        <end position="194"/>
    </location>
</feature>
<organism>
    <name type="scientific">African swine fever virus (isolate Pig/Spain/E-75/1975)</name>
    <name type="common">ASFV</name>
    <dbReference type="NCBI Taxonomy" id="686262"/>
    <lineage>
        <taxon>Viruses</taxon>
        <taxon>Varidnaviria</taxon>
        <taxon>Bamfordvirae</taxon>
        <taxon>Nucleocytoviricota</taxon>
        <taxon>Pokkesviricetes</taxon>
        <taxon>Asfuvirales</taxon>
        <taxon>Asfarviridae</taxon>
        <taxon>Asfivirus</taxon>
        <taxon>African swine fever virus</taxon>
    </lineage>
</organism>
<name>P30_ASFE7</name>
<keyword id="KW-0244">Early protein</keyword>
<keyword id="KW-1035">Host cytoplasm</keyword>
<keyword id="KW-1048">Host nucleus</keyword>
<keyword id="KW-0945">Host-virus interaction</keyword>
<keyword id="KW-0597">Phosphoprotein</keyword>
<keyword id="KW-0946">Virion</keyword>
<sequence length="194" mass="22348">MDFILNISMKMEVIFKTDLRSSSQVVFHAGSLYNWFSVEIINSGRIVTTAIKTLLSTVKYDIVKSAHIYAGQGYTEHQAQEEWNMILHVLFEEETESSASSESIHEKNDNETNECTSSFETLFEQEPSSEEPKDSKLYMLAQKTVQHIEQYGKAPDFNKVIRAHNFIQTIHGTPLKEEEKEVVRLMVIKLLKKK</sequence>
<comment type="function">
    <text evidence="2">Modifies the subcellular distribution of heterogeneous nuclear ribonucleoprotein K (HNRNPK) and may contribute to modulate HNRNPK functions related to processing and export of mRNAs during ASFV infection (By similarity). Necessary for virus internalization (By similarity).</text>
</comment>
<comment type="subunit">
    <text evidence="2">Oligomer. Interacts with host HNRNPK.</text>
</comment>
<comment type="subcellular location">
    <subcellularLocation>
        <location evidence="2">Host cytoplasm</location>
    </subcellularLocation>
    <subcellularLocation>
        <location evidence="2">Host nucleus</location>
    </subcellularLocation>
    <subcellularLocation>
        <location evidence="2">Virion</location>
    </subcellularLocation>
</comment>
<comment type="induction">
    <text evidence="3">Expressed in the early phase of the viral replicative cycle.</text>
</comment>
<comment type="PTM">
    <text evidence="1">Phosphorylated on serine residues in the 115 N-terminal amino acids.</text>
</comment>
<comment type="similarity">
    <text evidence="3">Belongs to the asfivirus phosphoprotein p30 family.</text>
</comment>
<accession>P29999</accession>